<name>HIS4_ACICJ</name>
<keyword id="KW-0028">Amino-acid biosynthesis</keyword>
<keyword id="KW-0963">Cytoplasm</keyword>
<keyword id="KW-0368">Histidine biosynthesis</keyword>
<keyword id="KW-0413">Isomerase</keyword>
<keyword id="KW-1185">Reference proteome</keyword>
<proteinExistence type="inferred from homology"/>
<protein>
    <recommendedName>
        <fullName evidence="1">1-(5-phosphoribosyl)-5-[(5-phosphoribosylamino)methylideneamino] imidazole-4-carboxamide isomerase</fullName>
        <ecNumber evidence="1">5.3.1.16</ecNumber>
    </recommendedName>
    <alternativeName>
        <fullName evidence="1">Phosphoribosylformimino-5-aminoimidazole carboxamide ribotide isomerase</fullName>
    </alternativeName>
</protein>
<evidence type="ECO:0000255" key="1">
    <source>
        <dbReference type="HAMAP-Rule" id="MF_01014"/>
    </source>
</evidence>
<sequence>MALTLYPAIDLKDGACVRLRRGEMDQATVYAEDPAAQARTFEAAGFTALHVVDLNGAFAGRPVNGEAVRAILTAVAMPVQLGGGIRDMAGIAAWIELGISRVILGSAAVKNPALVREAAAAFPGRIIVGIDARDGMVATEGWAETSSLPATEMAMRLQDAGIAAIIHTDIARDGMLQGLNLDATEALAAAIAIPVIASGGVAGIEDIRNLRAAAARTPNLAGTIIGRALYDGRIDPQAALAEAAAC</sequence>
<feature type="chain" id="PRO_1000063179" description="1-(5-phosphoribosyl)-5-[(5-phosphoribosylamino)methylideneamino] imidazole-4-carboxamide isomerase">
    <location>
        <begin position="1"/>
        <end position="246"/>
    </location>
</feature>
<feature type="active site" description="Proton acceptor" evidence="1">
    <location>
        <position position="10"/>
    </location>
</feature>
<feature type="active site" description="Proton donor" evidence="1">
    <location>
        <position position="131"/>
    </location>
</feature>
<gene>
    <name evidence="1" type="primary">hisA</name>
    <name type="ordered locus">Acry_1416</name>
</gene>
<accession>A5FYE4</accession>
<dbReference type="EC" id="5.3.1.16" evidence="1"/>
<dbReference type="EMBL" id="CP000697">
    <property type="protein sequence ID" value="ABQ30626.1"/>
    <property type="molecule type" value="Genomic_DNA"/>
</dbReference>
<dbReference type="RefSeq" id="WP_011942225.1">
    <property type="nucleotide sequence ID" value="NC_009484.1"/>
</dbReference>
<dbReference type="SMR" id="A5FYE4"/>
<dbReference type="STRING" id="349163.Acry_1416"/>
<dbReference type="KEGG" id="acr:Acry_1416"/>
<dbReference type="eggNOG" id="COG0106">
    <property type="taxonomic scope" value="Bacteria"/>
</dbReference>
<dbReference type="HOGENOM" id="CLU_048577_1_1_5"/>
<dbReference type="UniPathway" id="UPA00031">
    <property type="reaction ID" value="UER00009"/>
</dbReference>
<dbReference type="Proteomes" id="UP000000245">
    <property type="component" value="Chromosome"/>
</dbReference>
<dbReference type="GO" id="GO:0005737">
    <property type="term" value="C:cytoplasm"/>
    <property type="evidence" value="ECO:0007669"/>
    <property type="project" value="UniProtKB-SubCell"/>
</dbReference>
<dbReference type="GO" id="GO:0003949">
    <property type="term" value="F:1-(5-phosphoribosyl)-5-[(5-phosphoribosylamino)methylideneamino]imidazole-4-carboxamide isomerase activity"/>
    <property type="evidence" value="ECO:0007669"/>
    <property type="project" value="UniProtKB-UniRule"/>
</dbReference>
<dbReference type="GO" id="GO:0000105">
    <property type="term" value="P:L-histidine biosynthetic process"/>
    <property type="evidence" value="ECO:0007669"/>
    <property type="project" value="UniProtKB-UniRule"/>
</dbReference>
<dbReference type="GO" id="GO:0000162">
    <property type="term" value="P:L-tryptophan biosynthetic process"/>
    <property type="evidence" value="ECO:0007669"/>
    <property type="project" value="TreeGrafter"/>
</dbReference>
<dbReference type="CDD" id="cd04732">
    <property type="entry name" value="HisA"/>
    <property type="match status" value="1"/>
</dbReference>
<dbReference type="FunFam" id="3.20.20.70:FF:000009">
    <property type="entry name" value="1-(5-phosphoribosyl)-5-[(5-phosphoribosylamino)methylideneamino] imidazole-4-carboxamide isomerase"/>
    <property type="match status" value="1"/>
</dbReference>
<dbReference type="Gene3D" id="3.20.20.70">
    <property type="entry name" value="Aldolase class I"/>
    <property type="match status" value="1"/>
</dbReference>
<dbReference type="HAMAP" id="MF_01014">
    <property type="entry name" value="HisA"/>
    <property type="match status" value="1"/>
</dbReference>
<dbReference type="InterPro" id="IPR013785">
    <property type="entry name" value="Aldolase_TIM"/>
</dbReference>
<dbReference type="InterPro" id="IPR006062">
    <property type="entry name" value="His_biosynth"/>
</dbReference>
<dbReference type="InterPro" id="IPR006063">
    <property type="entry name" value="HisA_bact_arch"/>
</dbReference>
<dbReference type="InterPro" id="IPR044524">
    <property type="entry name" value="Isoase_HisA-like"/>
</dbReference>
<dbReference type="InterPro" id="IPR023016">
    <property type="entry name" value="Isoase_HisA-like_bact"/>
</dbReference>
<dbReference type="InterPro" id="IPR011060">
    <property type="entry name" value="RibuloseP-bd_barrel"/>
</dbReference>
<dbReference type="NCBIfam" id="TIGR00007">
    <property type="entry name" value="1-(5-phosphoribosyl)-5-[(5-phosphoribosylamino)methylideneamino]imidazole-4-carboxamide isomerase"/>
    <property type="match status" value="1"/>
</dbReference>
<dbReference type="PANTHER" id="PTHR43090">
    <property type="entry name" value="1-(5-PHOSPHORIBOSYL)-5-[(5-PHOSPHORIBOSYLAMINO)METHYLIDENEAMINO] IMIDAZOLE-4-CARBOXAMIDE ISOMERASE"/>
    <property type="match status" value="1"/>
</dbReference>
<dbReference type="PANTHER" id="PTHR43090:SF2">
    <property type="entry name" value="1-(5-PHOSPHORIBOSYL)-5-[(5-PHOSPHORIBOSYLAMINO)METHYLIDENEAMINO] IMIDAZOLE-4-CARBOXAMIDE ISOMERASE"/>
    <property type="match status" value="1"/>
</dbReference>
<dbReference type="Pfam" id="PF00977">
    <property type="entry name" value="His_biosynth"/>
    <property type="match status" value="1"/>
</dbReference>
<dbReference type="SUPFAM" id="SSF51366">
    <property type="entry name" value="Ribulose-phoshate binding barrel"/>
    <property type="match status" value="1"/>
</dbReference>
<comment type="catalytic activity">
    <reaction evidence="1">
        <text>1-(5-phospho-beta-D-ribosyl)-5-[(5-phospho-beta-D-ribosylamino)methylideneamino]imidazole-4-carboxamide = 5-[(5-phospho-1-deoxy-D-ribulos-1-ylimino)methylamino]-1-(5-phospho-beta-D-ribosyl)imidazole-4-carboxamide</text>
        <dbReference type="Rhea" id="RHEA:15469"/>
        <dbReference type="ChEBI" id="CHEBI:58435"/>
        <dbReference type="ChEBI" id="CHEBI:58525"/>
        <dbReference type="EC" id="5.3.1.16"/>
    </reaction>
</comment>
<comment type="pathway">
    <text evidence="1">Amino-acid biosynthesis; L-histidine biosynthesis; L-histidine from 5-phospho-alpha-D-ribose 1-diphosphate: step 4/9.</text>
</comment>
<comment type="subcellular location">
    <subcellularLocation>
        <location evidence="1">Cytoplasm</location>
    </subcellularLocation>
</comment>
<comment type="similarity">
    <text evidence="1">Belongs to the HisA/HisF family.</text>
</comment>
<organism>
    <name type="scientific">Acidiphilium cryptum (strain JF-5)</name>
    <dbReference type="NCBI Taxonomy" id="349163"/>
    <lineage>
        <taxon>Bacteria</taxon>
        <taxon>Pseudomonadati</taxon>
        <taxon>Pseudomonadota</taxon>
        <taxon>Alphaproteobacteria</taxon>
        <taxon>Acetobacterales</taxon>
        <taxon>Acidocellaceae</taxon>
        <taxon>Acidiphilium</taxon>
    </lineage>
</organism>
<reference key="1">
    <citation type="submission" date="2007-05" db="EMBL/GenBank/DDBJ databases">
        <title>Complete sequence of chromosome of Acidiphilium cryptum JF-5.</title>
        <authorList>
            <consortium name="US DOE Joint Genome Institute"/>
            <person name="Copeland A."/>
            <person name="Lucas S."/>
            <person name="Lapidus A."/>
            <person name="Barry K."/>
            <person name="Detter J.C."/>
            <person name="Glavina del Rio T."/>
            <person name="Hammon N."/>
            <person name="Israni S."/>
            <person name="Dalin E."/>
            <person name="Tice H."/>
            <person name="Pitluck S."/>
            <person name="Sims D."/>
            <person name="Brettin T."/>
            <person name="Bruce D."/>
            <person name="Han C."/>
            <person name="Schmutz J."/>
            <person name="Larimer F."/>
            <person name="Land M."/>
            <person name="Hauser L."/>
            <person name="Kyrpides N."/>
            <person name="Kim E."/>
            <person name="Magnuson T."/>
            <person name="Richardson P."/>
        </authorList>
    </citation>
    <scope>NUCLEOTIDE SEQUENCE [LARGE SCALE GENOMIC DNA]</scope>
    <source>
        <strain>JF-5</strain>
    </source>
</reference>